<keyword id="KW-0028">Amino-acid biosynthesis</keyword>
<keyword id="KW-0963">Cytoplasm</keyword>
<keyword id="KW-0554">One-carbon metabolism</keyword>
<keyword id="KW-0663">Pyridoxal phosphate</keyword>
<keyword id="KW-1185">Reference proteome</keyword>
<keyword id="KW-0808">Transferase</keyword>
<comment type="function">
    <text evidence="1">Catalyzes the reversible interconversion of serine and glycine with tetrahydrofolate (THF) serving as the one-carbon carrier. This reaction serves as the major source of one-carbon groups required for the biosynthesis of purines, thymidylate, methionine, and other important biomolecules. Also exhibits THF-independent aldolase activity toward beta-hydroxyamino acids, producing glycine and aldehydes, via a retro-aldol mechanism.</text>
</comment>
<comment type="catalytic activity">
    <reaction evidence="1">
        <text>(6R)-5,10-methylene-5,6,7,8-tetrahydrofolate + glycine + H2O = (6S)-5,6,7,8-tetrahydrofolate + L-serine</text>
        <dbReference type="Rhea" id="RHEA:15481"/>
        <dbReference type="ChEBI" id="CHEBI:15377"/>
        <dbReference type="ChEBI" id="CHEBI:15636"/>
        <dbReference type="ChEBI" id="CHEBI:33384"/>
        <dbReference type="ChEBI" id="CHEBI:57305"/>
        <dbReference type="ChEBI" id="CHEBI:57453"/>
        <dbReference type="EC" id="2.1.2.1"/>
    </reaction>
</comment>
<comment type="cofactor">
    <cofactor evidence="1">
        <name>pyridoxal 5'-phosphate</name>
        <dbReference type="ChEBI" id="CHEBI:597326"/>
    </cofactor>
</comment>
<comment type="pathway">
    <text evidence="1">One-carbon metabolism; tetrahydrofolate interconversion.</text>
</comment>
<comment type="pathway">
    <text evidence="1">Amino-acid biosynthesis; glycine biosynthesis; glycine from L-serine: step 1/1.</text>
</comment>
<comment type="subunit">
    <text evidence="1">Homodimer.</text>
</comment>
<comment type="subcellular location">
    <subcellularLocation>
        <location evidence="1">Cytoplasm</location>
    </subcellularLocation>
</comment>
<comment type="similarity">
    <text evidence="1">Belongs to the SHMT family.</text>
</comment>
<name>GLYA_CLOK5</name>
<organism>
    <name type="scientific">Clostridium kluyveri (strain ATCC 8527 / DSM 555 / NBRC 12016 / NCIMB 10680 / K1)</name>
    <dbReference type="NCBI Taxonomy" id="431943"/>
    <lineage>
        <taxon>Bacteria</taxon>
        <taxon>Bacillati</taxon>
        <taxon>Bacillota</taxon>
        <taxon>Clostridia</taxon>
        <taxon>Eubacteriales</taxon>
        <taxon>Clostridiaceae</taxon>
        <taxon>Clostridium</taxon>
    </lineage>
</organism>
<gene>
    <name evidence="1" type="primary">glyA</name>
    <name type="ordered locus">CKL_1284</name>
</gene>
<evidence type="ECO:0000255" key="1">
    <source>
        <dbReference type="HAMAP-Rule" id="MF_00051"/>
    </source>
</evidence>
<protein>
    <recommendedName>
        <fullName evidence="1">Serine hydroxymethyltransferase</fullName>
        <shortName evidence="1">SHMT</shortName>
        <shortName evidence="1">Serine methylase</shortName>
        <ecNumber evidence="1">2.1.2.1</ecNumber>
    </recommendedName>
</protein>
<reference key="1">
    <citation type="journal article" date="2008" name="Proc. Natl. Acad. Sci. U.S.A.">
        <title>The genome of Clostridium kluyveri, a strict anaerobe with unique metabolic features.</title>
        <authorList>
            <person name="Seedorf H."/>
            <person name="Fricke W.F."/>
            <person name="Veith B."/>
            <person name="Brueggemann H."/>
            <person name="Liesegang H."/>
            <person name="Strittmatter A."/>
            <person name="Miethke M."/>
            <person name="Buckel W."/>
            <person name="Hinderberger J."/>
            <person name="Li F."/>
            <person name="Hagemeier C."/>
            <person name="Thauer R.K."/>
            <person name="Gottschalk G."/>
        </authorList>
    </citation>
    <scope>NUCLEOTIDE SEQUENCE [LARGE SCALE GENOMIC DNA]</scope>
    <source>
        <strain>ATCC 8527 / DSM 555 / NBRC 12016 / NCIMB 10680 / K1</strain>
    </source>
</reference>
<dbReference type="EC" id="2.1.2.1" evidence="1"/>
<dbReference type="EMBL" id="CP000673">
    <property type="protein sequence ID" value="EDK33326.1"/>
    <property type="molecule type" value="Genomic_DNA"/>
</dbReference>
<dbReference type="RefSeq" id="WP_012101671.1">
    <property type="nucleotide sequence ID" value="NC_009706.1"/>
</dbReference>
<dbReference type="SMR" id="A5N7P5"/>
<dbReference type="STRING" id="431943.CKL_1284"/>
<dbReference type="KEGG" id="ckl:CKL_1284"/>
<dbReference type="eggNOG" id="COG0112">
    <property type="taxonomic scope" value="Bacteria"/>
</dbReference>
<dbReference type="HOGENOM" id="CLU_022477_2_1_9"/>
<dbReference type="UniPathway" id="UPA00193"/>
<dbReference type="UniPathway" id="UPA00288">
    <property type="reaction ID" value="UER01023"/>
</dbReference>
<dbReference type="Proteomes" id="UP000002411">
    <property type="component" value="Chromosome"/>
</dbReference>
<dbReference type="GO" id="GO:0005829">
    <property type="term" value="C:cytosol"/>
    <property type="evidence" value="ECO:0007669"/>
    <property type="project" value="TreeGrafter"/>
</dbReference>
<dbReference type="GO" id="GO:0004372">
    <property type="term" value="F:glycine hydroxymethyltransferase activity"/>
    <property type="evidence" value="ECO:0007669"/>
    <property type="project" value="UniProtKB-UniRule"/>
</dbReference>
<dbReference type="GO" id="GO:0030170">
    <property type="term" value="F:pyridoxal phosphate binding"/>
    <property type="evidence" value="ECO:0007669"/>
    <property type="project" value="UniProtKB-UniRule"/>
</dbReference>
<dbReference type="GO" id="GO:0019264">
    <property type="term" value="P:glycine biosynthetic process from serine"/>
    <property type="evidence" value="ECO:0007669"/>
    <property type="project" value="UniProtKB-UniRule"/>
</dbReference>
<dbReference type="GO" id="GO:0035999">
    <property type="term" value="P:tetrahydrofolate interconversion"/>
    <property type="evidence" value="ECO:0007669"/>
    <property type="project" value="UniProtKB-UniRule"/>
</dbReference>
<dbReference type="CDD" id="cd00378">
    <property type="entry name" value="SHMT"/>
    <property type="match status" value="1"/>
</dbReference>
<dbReference type="FunFam" id="3.40.640.10:FF:000001">
    <property type="entry name" value="Serine hydroxymethyltransferase"/>
    <property type="match status" value="1"/>
</dbReference>
<dbReference type="FunFam" id="3.90.1150.10:FF:000003">
    <property type="entry name" value="Serine hydroxymethyltransferase"/>
    <property type="match status" value="1"/>
</dbReference>
<dbReference type="Gene3D" id="3.90.1150.10">
    <property type="entry name" value="Aspartate Aminotransferase, domain 1"/>
    <property type="match status" value="1"/>
</dbReference>
<dbReference type="Gene3D" id="3.40.640.10">
    <property type="entry name" value="Type I PLP-dependent aspartate aminotransferase-like (Major domain)"/>
    <property type="match status" value="1"/>
</dbReference>
<dbReference type="HAMAP" id="MF_00051">
    <property type="entry name" value="SHMT"/>
    <property type="match status" value="1"/>
</dbReference>
<dbReference type="InterPro" id="IPR015424">
    <property type="entry name" value="PyrdxlP-dep_Trfase"/>
</dbReference>
<dbReference type="InterPro" id="IPR015421">
    <property type="entry name" value="PyrdxlP-dep_Trfase_major"/>
</dbReference>
<dbReference type="InterPro" id="IPR015422">
    <property type="entry name" value="PyrdxlP-dep_Trfase_small"/>
</dbReference>
<dbReference type="InterPro" id="IPR001085">
    <property type="entry name" value="Ser_HO-MeTrfase"/>
</dbReference>
<dbReference type="InterPro" id="IPR049943">
    <property type="entry name" value="Ser_HO-MeTrfase-like"/>
</dbReference>
<dbReference type="InterPro" id="IPR019798">
    <property type="entry name" value="Ser_HO-MeTrfase_PLP_BS"/>
</dbReference>
<dbReference type="InterPro" id="IPR039429">
    <property type="entry name" value="SHMT-like_dom"/>
</dbReference>
<dbReference type="NCBIfam" id="NF000586">
    <property type="entry name" value="PRK00011.1"/>
    <property type="match status" value="1"/>
</dbReference>
<dbReference type="PANTHER" id="PTHR11680">
    <property type="entry name" value="SERINE HYDROXYMETHYLTRANSFERASE"/>
    <property type="match status" value="1"/>
</dbReference>
<dbReference type="PANTHER" id="PTHR11680:SF35">
    <property type="entry name" value="SERINE HYDROXYMETHYLTRANSFERASE 1"/>
    <property type="match status" value="1"/>
</dbReference>
<dbReference type="Pfam" id="PF00464">
    <property type="entry name" value="SHMT"/>
    <property type="match status" value="1"/>
</dbReference>
<dbReference type="PIRSF" id="PIRSF000412">
    <property type="entry name" value="SHMT"/>
    <property type="match status" value="1"/>
</dbReference>
<dbReference type="SUPFAM" id="SSF53383">
    <property type="entry name" value="PLP-dependent transferases"/>
    <property type="match status" value="1"/>
</dbReference>
<dbReference type="PROSITE" id="PS00096">
    <property type="entry name" value="SHMT"/>
    <property type="match status" value="1"/>
</dbReference>
<proteinExistence type="inferred from homology"/>
<sequence>MDFNELKNTDKDIYGIIEEEWERQKNGIELIASENFTSKSVMEAMGSFLTNKYAEGYPGKRYYGGCYIVDKAEDLARDRMKKLFNAEHVNVQPHSGSQANMAVYMSVLKPGDTVLGMSLNHGGHLTHGSKVSFSGKLYNFVSYGLNSDTEIIDYDEMRELALKHKPKMIVSGASAYPRKIDFKKIREICDEVGAYMMVDMAHIAGIIAAGRHESPVPYADFVTTTTHKTLRGPRGGAIICKEKYGAALDKTIFPGIQGGPLMHIIAAKAVCFGEALKDEYKEYIDQIIKNAKVFGEELVKYGFRLVSGGTDNHLLLVDLTNKNITGKDLEELLDKVNITVNKNAIPFDKLKPNVTSGIRVGTPAVTTRGFKEEEMKKVAYFINKAVENREGDLSAIKREVIELCEAFPLYE</sequence>
<accession>A5N7P5</accession>
<feature type="chain" id="PRO_1000074891" description="Serine hydroxymethyltransferase">
    <location>
        <begin position="1"/>
        <end position="411"/>
    </location>
</feature>
<feature type="binding site" evidence="1">
    <location>
        <position position="119"/>
    </location>
    <ligand>
        <name>(6S)-5,6,7,8-tetrahydrofolate</name>
        <dbReference type="ChEBI" id="CHEBI:57453"/>
    </ligand>
</feature>
<feature type="binding site" evidence="1">
    <location>
        <begin position="123"/>
        <end position="125"/>
    </location>
    <ligand>
        <name>(6S)-5,6,7,8-tetrahydrofolate</name>
        <dbReference type="ChEBI" id="CHEBI:57453"/>
    </ligand>
</feature>
<feature type="site" description="Plays an important role in substrate specificity" evidence="1">
    <location>
        <position position="227"/>
    </location>
</feature>
<feature type="modified residue" description="N6-(pyridoxal phosphate)lysine" evidence="1">
    <location>
        <position position="228"/>
    </location>
</feature>